<sequence length="337" mass="36235">MTLQIGVIGCGAIGQDHIRRLTRTLSGARVVAVTDIDPTQAHAAVANHGLNAEVYANGGDLIEAPDVQAVLVTSWGPTHEEFVLKAIAQGKPVFCEKPLAVTADGCMRIVAAEQAHGSRLVQVGFMRPYDAGYRALKQVIDSGTIGAPLMLHCAHRNPSVGDRYMTDMAITDTLIHELDVLRWLTGDDYVSAQVVYPRKTRHASSHLADPQIVLLETAQGVRIDVEIFVNCQYGYDIQCEVVGENGIATLPDPQAVSLKHAARHAIAILTDWKDRFIAAYDIELQAFIDGVQGGALTGPSAWDGYAAAVAADACVRAQKSGAIERIEMAARPAFYRG</sequence>
<organism>
    <name type="scientific">Ralstonia nicotianae (strain ATCC BAA-1114 / GMI1000)</name>
    <name type="common">Ralstonia solanacearum</name>
    <dbReference type="NCBI Taxonomy" id="267608"/>
    <lineage>
        <taxon>Bacteria</taxon>
        <taxon>Pseudomonadati</taxon>
        <taxon>Pseudomonadota</taxon>
        <taxon>Betaproteobacteria</taxon>
        <taxon>Burkholderiales</taxon>
        <taxon>Burkholderiaceae</taxon>
        <taxon>Ralstonia</taxon>
        <taxon>Ralstonia solanacearum species complex</taxon>
    </lineage>
</organism>
<proteinExistence type="inferred from homology"/>
<gene>
    <name evidence="1" type="primary">iolG</name>
    <name type="ordered locus">RSc1246</name>
</gene>
<name>IOLG_RALN1</name>
<comment type="function">
    <text evidence="1">Involved in the oxidation of myo-inositol (MI) to 2-keto-myo-inositol (2KMI or 2-inosose).</text>
</comment>
<comment type="catalytic activity">
    <reaction evidence="1">
        <text>myo-inositol + NAD(+) = scyllo-inosose + NADH + H(+)</text>
        <dbReference type="Rhea" id="RHEA:16949"/>
        <dbReference type="ChEBI" id="CHEBI:15378"/>
        <dbReference type="ChEBI" id="CHEBI:17268"/>
        <dbReference type="ChEBI" id="CHEBI:17811"/>
        <dbReference type="ChEBI" id="CHEBI:57540"/>
        <dbReference type="ChEBI" id="CHEBI:57945"/>
        <dbReference type="EC" id="1.1.1.18"/>
    </reaction>
</comment>
<comment type="subunit">
    <text evidence="1">Homotetramer.</text>
</comment>
<comment type="similarity">
    <text evidence="1">Belongs to the Gfo/Idh/MocA family.</text>
</comment>
<feature type="chain" id="PRO_0000352584" description="Inositol 2-dehydrogenase">
    <location>
        <begin position="1"/>
        <end position="337"/>
    </location>
</feature>
<reference key="1">
    <citation type="journal article" date="2002" name="Nature">
        <title>Genome sequence of the plant pathogen Ralstonia solanacearum.</title>
        <authorList>
            <person name="Salanoubat M."/>
            <person name="Genin S."/>
            <person name="Artiguenave F."/>
            <person name="Gouzy J."/>
            <person name="Mangenot S."/>
            <person name="Arlat M."/>
            <person name="Billault A."/>
            <person name="Brottier P."/>
            <person name="Camus J.-C."/>
            <person name="Cattolico L."/>
            <person name="Chandler M."/>
            <person name="Choisne N."/>
            <person name="Claudel-Renard C."/>
            <person name="Cunnac S."/>
            <person name="Demange N."/>
            <person name="Gaspin C."/>
            <person name="Lavie M."/>
            <person name="Moisan A."/>
            <person name="Robert C."/>
            <person name="Saurin W."/>
            <person name="Schiex T."/>
            <person name="Siguier P."/>
            <person name="Thebault P."/>
            <person name="Whalen M."/>
            <person name="Wincker P."/>
            <person name="Levy M."/>
            <person name="Weissenbach J."/>
            <person name="Boucher C.A."/>
        </authorList>
    </citation>
    <scope>NUCLEOTIDE SEQUENCE [LARGE SCALE GENOMIC DNA]</scope>
    <source>
        <strain>ATCC BAA-1114 / GMI1000</strain>
    </source>
</reference>
<evidence type="ECO:0000255" key="1">
    <source>
        <dbReference type="HAMAP-Rule" id="MF_01671"/>
    </source>
</evidence>
<dbReference type="EC" id="1.1.1.18" evidence="1"/>
<dbReference type="EMBL" id="AL646052">
    <property type="protein sequence ID" value="CAD14948.1"/>
    <property type="molecule type" value="Genomic_DNA"/>
</dbReference>
<dbReference type="RefSeq" id="WP_011001195.1">
    <property type="nucleotide sequence ID" value="NC_003295.1"/>
</dbReference>
<dbReference type="SMR" id="Q8XZZ9"/>
<dbReference type="STRING" id="267608.RSc1246"/>
<dbReference type="EnsemblBacteria" id="CAD14948">
    <property type="protein sequence ID" value="CAD14948"/>
    <property type="gene ID" value="RSc1246"/>
</dbReference>
<dbReference type="KEGG" id="rso:RSc1246"/>
<dbReference type="PATRIC" id="fig|267608.8.peg.1266"/>
<dbReference type="eggNOG" id="COG0673">
    <property type="taxonomic scope" value="Bacteria"/>
</dbReference>
<dbReference type="HOGENOM" id="CLU_023194_0_1_4"/>
<dbReference type="Proteomes" id="UP000001436">
    <property type="component" value="Chromosome"/>
</dbReference>
<dbReference type="GO" id="GO:0050112">
    <property type="term" value="F:inositol 2-dehydrogenase (NAD+) activity"/>
    <property type="evidence" value="ECO:0007669"/>
    <property type="project" value="UniProtKB-UniRule"/>
</dbReference>
<dbReference type="GO" id="GO:0000166">
    <property type="term" value="F:nucleotide binding"/>
    <property type="evidence" value="ECO:0007669"/>
    <property type="project" value="InterPro"/>
</dbReference>
<dbReference type="GO" id="GO:0019310">
    <property type="term" value="P:inositol catabolic process"/>
    <property type="evidence" value="ECO:0007669"/>
    <property type="project" value="UniProtKB-UniRule"/>
</dbReference>
<dbReference type="Gene3D" id="3.30.360.10">
    <property type="entry name" value="Dihydrodipicolinate Reductase, domain 2"/>
    <property type="match status" value="1"/>
</dbReference>
<dbReference type="Gene3D" id="3.40.50.720">
    <property type="entry name" value="NAD(P)-binding Rossmann-like Domain"/>
    <property type="match status" value="1"/>
</dbReference>
<dbReference type="HAMAP" id="MF_01671">
    <property type="entry name" value="IolG"/>
    <property type="match status" value="1"/>
</dbReference>
<dbReference type="InterPro" id="IPR050424">
    <property type="entry name" value="Gfo-Idh-MocA_inositol_DH"/>
</dbReference>
<dbReference type="InterPro" id="IPR004104">
    <property type="entry name" value="Gfo/Idh/MocA-like_OxRdtase_C"/>
</dbReference>
<dbReference type="InterPro" id="IPR000683">
    <property type="entry name" value="Gfo/Idh/MocA-like_OxRdtase_N"/>
</dbReference>
<dbReference type="InterPro" id="IPR023794">
    <property type="entry name" value="MI/DCI_dehydrogenase"/>
</dbReference>
<dbReference type="InterPro" id="IPR036291">
    <property type="entry name" value="NAD(P)-bd_dom_sf"/>
</dbReference>
<dbReference type="PANTHER" id="PTHR43593">
    <property type="match status" value="1"/>
</dbReference>
<dbReference type="PANTHER" id="PTHR43593:SF1">
    <property type="entry name" value="INOSITOL 2-DEHYDROGENASE"/>
    <property type="match status" value="1"/>
</dbReference>
<dbReference type="Pfam" id="PF01408">
    <property type="entry name" value="GFO_IDH_MocA"/>
    <property type="match status" value="1"/>
</dbReference>
<dbReference type="Pfam" id="PF02894">
    <property type="entry name" value="GFO_IDH_MocA_C"/>
    <property type="match status" value="1"/>
</dbReference>
<dbReference type="SUPFAM" id="SSF55347">
    <property type="entry name" value="Glyceraldehyde-3-phosphate dehydrogenase-like, C-terminal domain"/>
    <property type="match status" value="1"/>
</dbReference>
<dbReference type="SUPFAM" id="SSF51735">
    <property type="entry name" value="NAD(P)-binding Rossmann-fold domains"/>
    <property type="match status" value="1"/>
</dbReference>
<accession>Q8XZZ9</accession>
<keyword id="KW-0520">NAD</keyword>
<keyword id="KW-0560">Oxidoreductase</keyword>
<keyword id="KW-1185">Reference proteome</keyword>
<protein>
    <recommendedName>
        <fullName evidence="1">Inositol 2-dehydrogenase</fullName>
        <ecNumber evidence="1">1.1.1.18</ecNumber>
    </recommendedName>
    <alternativeName>
        <fullName evidence="1">Myo-inositol 2-dehydrogenase</fullName>
        <shortName evidence="1">MI 2-dehydrogenase</shortName>
    </alternativeName>
</protein>